<proteinExistence type="evidence at protein level"/>
<accession>P0DX40</accession>
<evidence type="ECO:0000250" key="1">
    <source>
        <dbReference type="UniProtKB" id="Q9KJF1"/>
    </source>
</evidence>
<evidence type="ECO:0000269" key="2">
    <source>
    </source>
</evidence>
<evidence type="ECO:0000269" key="3">
    <source>
    </source>
</evidence>
<evidence type="ECO:0000303" key="4">
    <source>
    </source>
</evidence>
<evidence type="ECO:0000305" key="5"/>
<evidence type="ECO:0000305" key="6">
    <source>
    </source>
</evidence>
<evidence type="ECO:0000312" key="7">
    <source>
        <dbReference type="EMBL" id="BAL42247.1"/>
    </source>
</evidence>
<feature type="chain" id="PRO_0000458872" description="CLA biosynthesis dehydrogenase/reductase">
    <location>
        <begin position="1"/>
        <end position="286"/>
    </location>
</feature>
<feature type="active site" description="Proton acceptor" evidence="1">
    <location>
        <position position="156"/>
    </location>
</feature>
<feature type="binding site" evidence="1">
    <location>
        <position position="37"/>
    </location>
    <ligand>
        <name>NAD(+)</name>
        <dbReference type="ChEBI" id="CHEBI:57540"/>
    </ligand>
</feature>
<feature type="binding site" evidence="1">
    <location>
        <position position="63"/>
    </location>
    <ligand>
        <name>NAD(+)</name>
        <dbReference type="ChEBI" id="CHEBI:57540"/>
    </ligand>
</feature>
<feature type="binding site" evidence="1">
    <location>
        <position position="64"/>
    </location>
    <ligand>
        <name>NAD(+)</name>
        <dbReference type="ChEBI" id="CHEBI:57540"/>
    </ligand>
</feature>
<feature type="binding site" evidence="1">
    <location>
        <position position="90"/>
    </location>
    <ligand>
        <name>NAD(+)</name>
        <dbReference type="ChEBI" id="CHEBI:57540"/>
    </ligand>
</feature>
<feature type="binding site" evidence="1">
    <location>
        <position position="156"/>
    </location>
    <ligand>
        <name>NAD(+)</name>
        <dbReference type="ChEBI" id="CHEBI:57540"/>
    </ligand>
</feature>
<feature type="binding site" evidence="1">
    <location>
        <position position="160"/>
    </location>
    <ligand>
        <name>NAD(+)</name>
        <dbReference type="ChEBI" id="CHEBI:57540"/>
    </ligand>
</feature>
<protein>
    <recommendedName>
        <fullName evidence="6">CLA biosynthesis dehydrogenase/reductase</fullName>
        <shortName evidence="4">CLA-DH</shortName>
        <ecNumber evidence="3">1.1.1.-</ecNumber>
    </recommendedName>
</protein>
<comment type="function">
    <text evidence="2 3">Is involved in a saturation metabolic pathway of polyunsaturated fatty acids, that detoxifies unsaturated fatty acids and generates hydroxy fatty acids, oxo fatty acids, conjugated fatty acids such as conjugated linoleic acids (CLAs), and partially saturated trans-fatty acids as intermediates. CLA-DH catalyzes the dehydrogenation/reduction steps in the production of 10-oxo-(12Z)-octadecenoate, 10-hydroxy-(11E)-octadecenoate and 10-hydroxyoctadecanoate during linoleate metabolism (PubMed:22093837, PubMed:24127592). As part of the gut microbiome, this enzyme modifies host fatty acid composition and is expected to improve human health by altering lipid metabolism related to the onset of metabolic syndrome (PubMed:24127592).</text>
</comment>
<comment type="catalytic activity">
    <reaction evidence="3">
        <text>(10S)-hydroxy-(12Z)-octadecenoate + NAD(+) = 10-oxo-(12Z)-octadecenoate + NADH + H(+)</text>
        <dbReference type="Rhea" id="RHEA:75731"/>
        <dbReference type="ChEBI" id="CHEBI:15378"/>
        <dbReference type="ChEBI" id="CHEBI:57540"/>
        <dbReference type="ChEBI" id="CHEBI:57945"/>
        <dbReference type="ChEBI" id="CHEBI:194434"/>
        <dbReference type="ChEBI" id="CHEBI:194435"/>
    </reaction>
    <physiologicalReaction direction="left-to-right" evidence="3">
        <dbReference type="Rhea" id="RHEA:75732"/>
    </physiologicalReaction>
</comment>
<comment type="catalytic activity">
    <reaction evidence="3">
        <text>10-oxo-(11E)-octadecenoate + NADH + H(+) = 10-hydroxy-(11E)-octadecenoate + NAD(+)</text>
        <dbReference type="Rhea" id="RHEA:75743"/>
        <dbReference type="ChEBI" id="CHEBI:15378"/>
        <dbReference type="ChEBI" id="CHEBI:57540"/>
        <dbReference type="ChEBI" id="CHEBI:57945"/>
        <dbReference type="ChEBI" id="CHEBI:194436"/>
        <dbReference type="ChEBI" id="CHEBI:194439"/>
    </reaction>
    <physiologicalReaction direction="left-to-right" evidence="3">
        <dbReference type="Rhea" id="RHEA:75744"/>
    </physiologicalReaction>
</comment>
<comment type="catalytic activity">
    <reaction evidence="3">
        <text>10-oxooctadecanoate + NADH + H(+) = 10-hydroxyoctadecanoate + NAD(+)</text>
        <dbReference type="Rhea" id="RHEA:75747"/>
        <dbReference type="ChEBI" id="CHEBI:15378"/>
        <dbReference type="ChEBI" id="CHEBI:57540"/>
        <dbReference type="ChEBI" id="CHEBI:57945"/>
        <dbReference type="ChEBI" id="CHEBI:143089"/>
        <dbReference type="ChEBI" id="CHEBI:194437"/>
    </reaction>
    <physiologicalReaction direction="left-to-right" evidence="3">
        <dbReference type="Rhea" id="RHEA:75748"/>
    </physiologicalReaction>
</comment>
<comment type="pathway">
    <text evidence="2 3">Lipid metabolism; fatty acid metabolism.</text>
</comment>
<comment type="subcellular location">
    <subcellularLocation>
        <location evidence="2">Cytoplasm</location>
    </subcellularLocation>
</comment>
<comment type="similarity">
    <text evidence="5">Belongs to the short-chain dehydrogenases/reductases (SDR) family.</text>
</comment>
<organism>
    <name type="scientific">Lactiplantibacillus plantarum</name>
    <name type="common">Lactobacillus plantarum</name>
    <dbReference type="NCBI Taxonomy" id="1590"/>
    <lineage>
        <taxon>Bacteria</taxon>
        <taxon>Bacillati</taxon>
        <taxon>Bacillota</taxon>
        <taxon>Bacilli</taxon>
        <taxon>Lactobacillales</taxon>
        <taxon>Lactobacillaceae</taxon>
        <taxon>Lactiplantibacillus</taxon>
    </lineage>
</organism>
<sequence length="286" mass="32092">MKDFKDKVMFITGAAHGFGQVIAEGAADRGMKLTIVDIDEPALKKTYQHILDKGAEVLMVTADVTKEASVDDAVEQAMEKFGRIDLLINNAGIALPGRIWELPTRDWEWIMHINLMSQVYAMKRVIPIMIQQKTHADILNVASIAGLVDTPGMPSYHASKFASVGMTEATAYDLQRANIDIDMHVMCPGFVQTDLYHTENHRPAQYSDPTDPYYQSEAYLKGQQFAKYVITNGKPIDTIADTVFKALEDNRFYILTHPEYNPLIEDRVKRIVTDGAPDVHIMDGIM</sequence>
<reference evidence="7" key="1">
    <citation type="journal article" date="2011" name="Biochem. Biophys. Res. Commun.">
        <title>Novel multi-component enzyme machinery in lactic acid bacteria catalyzing C=C double bond migration useful for conjugated fatty acid synthesis.</title>
        <authorList>
            <person name="Kishino S."/>
            <person name="Park S.B."/>
            <person name="Takeuchi M."/>
            <person name="Yokozeki K."/>
            <person name="Shimizu S."/>
            <person name="Ogawa J."/>
        </authorList>
    </citation>
    <scope>NUCLEOTIDE SEQUENCE [GENOMIC DNA]</scope>
    <scope>FUNCTION</scope>
    <scope>PATHWAY</scope>
    <scope>SUBCELLULAR LOCATION</scope>
    <source>
        <strain>AKU 1009a</strain>
    </source>
</reference>
<reference key="2">
    <citation type="journal article" date="2013" name="Proc. Natl. Acad. Sci. U.S.A.">
        <title>Polyunsaturated fatty acid saturation by gut lactic acid bacteria affecting host lipid composition.</title>
        <authorList>
            <person name="Kishino S."/>
            <person name="Takeuchi M."/>
            <person name="Park S.B."/>
            <person name="Hirata A."/>
            <person name="Kitamura N."/>
            <person name="Kunisawa J."/>
            <person name="Kiyono H."/>
            <person name="Iwamoto R."/>
            <person name="Isobe Y."/>
            <person name="Arita M."/>
            <person name="Arai H."/>
            <person name="Ueda K."/>
            <person name="Shima J."/>
            <person name="Takahashi S."/>
            <person name="Yokozeki K."/>
            <person name="Shimizu S."/>
            <person name="Ogawa J."/>
        </authorList>
    </citation>
    <scope>FUNCTION</scope>
    <scope>CATALYTIC ACTIVITY</scope>
    <scope>PATHWAY</scope>
    <source>
        <strain>AKU 1009a</strain>
    </source>
</reference>
<keyword id="KW-0963">Cytoplasm</keyword>
<keyword id="KW-0216">Detoxification</keyword>
<keyword id="KW-0520">NAD</keyword>
<keyword id="KW-0560">Oxidoreductase</keyword>
<gene>
    <name evidence="4 7" type="primary">cla-dh</name>
</gene>
<name>CLADH_LACPN</name>
<dbReference type="EC" id="1.1.1.-" evidence="3"/>
<dbReference type="EMBL" id="AB671230">
    <property type="protein sequence ID" value="BAL42247.1"/>
    <property type="molecule type" value="Genomic_DNA"/>
</dbReference>
<dbReference type="RefSeq" id="WP_003641673.1">
    <property type="nucleotide sequence ID" value="NZ_AP018405.1"/>
</dbReference>
<dbReference type="SMR" id="P0DX40"/>
<dbReference type="GeneID" id="89667815"/>
<dbReference type="UniPathway" id="UPA00199"/>
<dbReference type="GO" id="GO:0005737">
    <property type="term" value="C:cytoplasm"/>
    <property type="evidence" value="ECO:0007669"/>
    <property type="project" value="UniProtKB-SubCell"/>
</dbReference>
<dbReference type="GO" id="GO:0016616">
    <property type="term" value="F:oxidoreductase activity, acting on the CH-OH group of donors, NAD or NADP as acceptor"/>
    <property type="evidence" value="ECO:0007669"/>
    <property type="project" value="TreeGrafter"/>
</dbReference>
<dbReference type="GO" id="GO:0006631">
    <property type="term" value="P:fatty acid metabolic process"/>
    <property type="evidence" value="ECO:0007669"/>
    <property type="project" value="UniProtKB-UniPathway"/>
</dbReference>
<dbReference type="GO" id="GO:0009636">
    <property type="term" value="P:response to toxic substance"/>
    <property type="evidence" value="ECO:0007669"/>
    <property type="project" value="UniProtKB-KW"/>
</dbReference>
<dbReference type="CDD" id="cd05233">
    <property type="entry name" value="SDR_c"/>
    <property type="match status" value="1"/>
</dbReference>
<dbReference type="FunFam" id="3.40.50.720:FF:000084">
    <property type="entry name" value="Short-chain dehydrogenase reductase"/>
    <property type="match status" value="1"/>
</dbReference>
<dbReference type="Gene3D" id="3.40.50.720">
    <property type="entry name" value="NAD(P)-binding Rossmann-like Domain"/>
    <property type="match status" value="1"/>
</dbReference>
<dbReference type="InterPro" id="IPR036291">
    <property type="entry name" value="NAD(P)-bd_dom_sf"/>
</dbReference>
<dbReference type="InterPro" id="IPR002347">
    <property type="entry name" value="SDR_fam"/>
</dbReference>
<dbReference type="PANTHER" id="PTHR24322">
    <property type="entry name" value="PKSB"/>
    <property type="match status" value="1"/>
</dbReference>
<dbReference type="PANTHER" id="PTHR24322:SF736">
    <property type="entry name" value="RETINOL DEHYDROGENASE 10"/>
    <property type="match status" value="1"/>
</dbReference>
<dbReference type="Pfam" id="PF00106">
    <property type="entry name" value="adh_short"/>
    <property type="match status" value="1"/>
</dbReference>
<dbReference type="PRINTS" id="PR00081">
    <property type="entry name" value="GDHRDH"/>
</dbReference>
<dbReference type="PRINTS" id="PR00080">
    <property type="entry name" value="SDRFAMILY"/>
</dbReference>
<dbReference type="SUPFAM" id="SSF51735">
    <property type="entry name" value="NAD(P)-binding Rossmann-fold domains"/>
    <property type="match status" value="1"/>
</dbReference>